<accession>B8ZRC1</accession>
<evidence type="ECO:0000255" key="1">
    <source>
        <dbReference type="HAMAP-Rule" id="MF_00131"/>
    </source>
</evidence>
<feature type="chain" id="PRO_1000198720" description="Tryptophan synthase alpha chain">
    <location>
        <begin position="1"/>
        <end position="270"/>
    </location>
</feature>
<feature type="active site" description="Proton acceptor" evidence="1">
    <location>
        <position position="57"/>
    </location>
</feature>
<feature type="active site" description="Proton acceptor" evidence="1">
    <location>
        <position position="68"/>
    </location>
</feature>
<organism>
    <name type="scientific">Mycobacterium leprae (strain Br4923)</name>
    <dbReference type="NCBI Taxonomy" id="561304"/>
    <lineage>
        <taxon>Bacteria</taxon>
        <taxon>Bacillati</taxon>
        <taxon>Actinomycetota</taxon>
        <taxon>Actinomycetes</taxon>
        <taxon>Mycobacteriales</taxon>
        <taxon>Mycobacteriaceae</taxon>
        <taxon>Mycobacterium</taxon>
    </lineage>
</organism>
<name>TRPA_MYCLB</name>
<protein>
    <recommendedName>
        <fullName evidence="1">Tryptophan synthase alpha chain</fullName>
        <ecNumber evidence="1">4.2.1.20</ecNumber>
    </recommendedName>
</protein>
<gene>
    <name evidence="1" type="primary">trpA</name>
    <name type="ordered locus">MLBr01273</name>
</gene>
<dbReference type="EC" id="4.2.1.20" evidence="1"/>
<dbReference type="EMBL" id="FM211192">
    <property type="protein sequence ID" value="CAR71368.1"/>
    <property type="molecule type" value="Genomic_DNA"/>
</dbReference>
<dbReference type="SMR" id="B8ZRC1"/>
<dbReference type="KEGG" id="mlb:MLBr01273"/>
<dbReference type="HOGENOM" id="CLU_016734_0_0_11"/>
<dbReference type="UniPathway" id="UPA00035">
    <property type="reaction ID" value="UER00044"/>
</dbReference>
<dbReference type="Proteomes" id="UP000006900">
    <property type="component" value="Chromosome"/>
</dbReference>
<dbReference type="GO" id="GO:0005829">
    <property type="term" value="C:cytosol"/>
    <property type="evidence" value="ECO:0007669"/>
    <property type="project" value="TreeGrafter"/>
</dbReference>
<dbReference type="GO" id="GO:0004834">
    <property type="term" value="F:tryptophan synthase activity"/>
    <property type="evidence" value="ECO:0007669"/>
    <property type="project" value="UniProtKB-UniRule"/>
</dbReference>
<dbReference type="CDD" id="cd04724">
    <property type="entry name" value="Tryptophan_synthase_alpha"/>
    <property type="match status" value="1"/>
</dbReference>
<dbReference type="FunFam" id="3.20.20.70:FF:000037">
    <property type="entry name" value="Tryptophan synthase alpha chain"/>
    <property type="match status" value="1"/>
</dbReference>
<dbReference type="Gene3D" id="3.20.20.70">
    <property type="entry name" value="Aldolase class I"/>
    <property type="match status" value="1"/>
</dbReference>
<dbReference type="HAMAP" id="MF_00131">
    <property type="entry name" value="Trp_synth_alpha"/>
    <property type="match status" value="1"/>
</dbReference>
<dbReference type="InterPro" id="IPR013785">
    <property type="entry name" value="Aldolase_TIM"/>
</dbReference>
<dbReference type="InterPro" id="IPR011060">
    <property type="entry name" value="RibuloseP-bd_barrel"/>
</dbReference>
<dbReference type="InterPro" id="IPR018204">
    <property type="entry name" value="Trp_synthase_alpha_AS"/>
</dbReference>
<dbReference type="InterPro" id="IPR002028">
    <property type="entry name" value="Trp_synthase_suA"/>
</dbReference>
<dbReference type="NCBIfam" id="TIGR00262">
    <property type="entry name" value="trpA"/>
    <property type="match status" value="1"/>
</dbReference>
<dbReference type="PANTHER" id="PTHR43406:SF1">
    <property type="entry name" value="TRYPTOPHAN SYNTHASE ALPHA CHAIN, CHLOROPLASTIC"/>
    <property type="match status" value="1"/>
</dbReference>
<dbReference type="PANTHER" id="PTHR43406">
    <property type="entry name" value="TRYPTOPHAN SYNTHASE, ALPHA CHAIN"/>
    <property type="match status" value="1"/>
</dbReference>
<dbReference type="Pfam" id="PF00290">
    <property type="entry name" value="Trp_syntA"/>
    <property type="match status" value="1"/>
</dbReference>
<dbReference type="SUPFAM" id="SSF51366">
    <property type="entry name" value="Ribulose-phoshate binding barrel"/>
    <property type="match status" value="1"/>
</dbReference>
<dbReference type="PROSITE" id="PS00167">
    <property type="entry name" value="TRP_SYNTHASE_ALPHA"/>
    <property type="match status" value="1"/>
</dbReference>
<keyword id="KW-0028">Amino-acid biosynthesis</keyword>
<keyword id="KW-0057">Aromatic amino acid biosynthesis</keyword>
<keyword id="KW-0456">Lyase</keyword>
<keyword id="KW-0822">Tryptophan biosynthesis</keyword>
<comment type="function">
    <text evidence="1">The alpha subunit is responsible for the aldol cleavage of indoleglycerol phosphate to indole and glyceraldehyde 3-phosphate.</text>
</comment>
<comment type="catalytic activity">
    <reaction evidence="1">
        <text>(1S,2R)-1-C-(indol-3-yl)glycerol 3-phosphate + L-serine = D-glyceraldehyde 3-phosphate + L-tryptophan + H2O</text>
        <dbReference type="Rhea" id="RHEA:10532"/>
        <dbReference type="ChEBI" id="CHEBI:15377"/>
        <dbReference type="ChEBI" id="CHEBI:33384"/>
        <dbReference type="ChEBI" id="CHEBI:57912"/>
        <dbReference type="ChEBI" id="CHEBI:58866"/>
        <dbReference type="ChEBI" id="CHEBI:59776"/>
        <dbReference type="EC" id="4.2.1.20"/>
    </reaction>
</comment>
<comment type="pathway">
    <text evidence="1">Amino-acid biosynthesis; L-tryptophan biosynthesis; L-tryptophan from chorismate: step 5/5.</text>
</comment>
<comment type="subunit">
    <text evidence="1">Tetramer of two alpha and two beta chains.</text>
</comment>
<comment type="similarity">
    <text evidence="1">Belongs to the TrpA family.</text>
</comment>
<reference key="1">
    <citation type="journal article" date="2009" name="Nat. Genet.">
        <title>Comparative genomic and phylogeographic analysis of Mycobacterium leprae.</title>
        <authorList>
            <person name="Monot M."/>
            <person name="Honore N."/>
            <person name="Garnier T."/>
            <person name="Zidane N."/>
            <person name="Sherafi D."/>
            <person name="Paniz-Mondolfi A."/>
            <person name="Matsuoka M."/>
            <person name="Taylor G.M."/>
            <person name="Donoghue H.D."/>
            <person name="Bouwman A."/>
            <person name="Mays S."/>
            <person name="Watson C."/>
            <person name="Lockwood D."/>
            <person name="Khamispour A."/>
            <person name="Dowlati Y."/>
            <person name="Jianping S."/>
            <person name="Rea T.H."/>
            <person name="Vera-Cabrera L."/>
            <person name="Stefani M.M."/>
            <person name="Banu S."/>
            <person name="Macdonald M."/>
            <person name="Sapkota B.R."/>
            <person name="Spencer J.S."/>
            <person name="Thomas J."/>
            <person name="Harshman K."/>
            <person name="Singh P."/>
            <person name="Busso P."/>
            <person name="Gattiker A."/>
            <person name="Rougemont J."/>
            <person name="Brennan P.J."/>
            <person name="Cole S.T."/>
        </authorList>
    </citation>
    <scope>NUCLEOTIDE SEQUENCE [LARGE SCALE GENOMIC DNA]</scope>
    <source>
        <strain>Br4923</strain>
    </source>
</reference>
<proteinExistence type="inferred from homology"/>
<sequence>MMVLEQSETSRLGPVFDSCRADNRAALIGYLPTGYPDVPTSVDAMIELVESGCDIIEVGVPYSDPGMDGPTIARATEVALRGGVRVRDTLAAVEAISQAGGRAVVMTYWNPVLRYGVCAFARDLESAGGHGLVTPDLIPDEARQWIAASEKHRLDRIFLVAPSSTPHRLVTTVGASRGFVYAVSVMGVTGARDAVSQVVPELVARVKAVSDIAVGVGLGVRSREQAAQIGGYADGVIVGSALVSALGDGLPRLRALAEELAAGVRQRTFM</sequence>